<organism>
    <name type="scientific">Homo sapiens</name>
    <name type="common">Human</name>
    <dbReference type="NCBI Taxonomy" id="9606"/>
    <lineage>
        <taxon>Eukaryota</taxon>
        <taxon>Metazoa</taxon>
        <taxon>Chordata</taxon>
        <taxon>Craniata</taxon>
        <taxon>Vertebrata</taxon>
        <taxon>Euteleostomi</taxon>
        <taxon>Mammalia</taxon>
        <taxon>Eutheria</taxon>
        <taxon>Euarchontoglires</taxon>
        <taxon>Primates</taxon>
        <taxon>Haplorrhini</taxon>
        <taxon>Catarrhini</taxon>
        <taxon>Hominidae</taxon>
        <taxon>Homo</taxon>
    </lineage>
</organism>
<evidence type="ECO:0000269" key="1">
    <source>
    </source>
</evidence>
<evidence type="ECO:0000305" key="2"/>
<comment type="function">
    <text>In the hair cortex, hair keratin intermediate filaments are embedded in an interfilamentous matrix, consisting of hair keratin-associated proteins (KRTAP), which are essential for the formation of a rigid and resistant hair shaft through their extensive disulfide bond cross-linking with abundant cysteine residues of hair keratins. The matrix proteins include the high-sulfur and high-glycine-tyrosine keratins.</text>
</comment>
<comment type="subunit">
    <text>Interacts with hair keratins.</text>
</comment>
<comment type="interaction">
    <interactant intactId="EBI-11953996">
        <id>Q3LI77</id>
    </interactant>
    <interactant intactId="EBI-2949658">
        <id>O95429</id>
        <label>BAG4</label>
    </interactant>
    <organismsDiffer>false</organismsDiffer>
    <experiments>3</experiments>
</comment>
<comment type="interaction">
    <interactant intactId="EBI-11953996">
        <id>Q3LI77</id>
    </interactant>
    <interactant intactId="EBI-11063830">
        <id>Q86X02</id>
        <label>CDR2L</label>
    </interactant>
    <organismsDiffer>false</organismsDiffer>
    <experiments>3</experiments>
</comment>
<comment type="interaction">
    <interactant intactId="EBI-11953996">
        <id>Q3LI77</id>
    </interactant>
    <interactant intactId="EBI-3867333">
        <id>A8MQ03</id>
        <label>CYSRT1</label>
    </interactant>
    <organismsDiffer>false</organismsDiffer>
    <experiments>3</experiments>
</comment>
<comment type="interaction">
    <interactant intactId="EBI-11953996">
        <id>Q3LI77</id>
    </interactant>
    <interactant intactId="EBI-11977403">
        <id>A0A0C3SFZ9</id>
        <label>FCHO1</label>
    </interactant>
    <organismsDiffer>false</organismsDiffer>
    <experiments>3</experiments>
</comment>
<comment type="interaction">
    <interactant intactId="EBI-11953996">
        <id>Q3LI77</id>
    </interactant>
    <interactant intactId="EBI-356700">
        <id>P57678</id>
        <label>GEMIN4</label>
    </interactant>
    <organismsDiffer>false</organismsDiffer>
    <experiments>3</experiments>
</comment>
<comment type="interaction">
    <interactant intactId="EBI-11953996">
        <id>Q3LI77</id>
    </interactant>
    <interactant intactId="EBI-740785">
        <id>P49639</id>
        <label>HOXA1</label>
    </interactant>
    <organismsDiffer>false</organismsDiffer>
    <experiments>3</experiments>
</comment>
<comment type="interaction">
    <interactant intactId="EBI-11953996">
        <id>Q3LI77</id>
    </interactant>
    <interactant intactId="EBI-22310682">
        <id>P0DPK4</id>
        <label>NOTCH2NLC</label>
    </interactant>
    <organismsDiffer>false</organismsDiffer>
    <experiments>3</experiments>
</comment>
<comment type="interaction">
    <interactant intactId="EBI-11953996">
        <id>Q3LI77</id>
    </interactant>
    <interactant intactId="EBI-372094">
        <id>Q9BQY4</id>
        <label>RHOXF2</label>
    </interactant>
    <organismsDiffer>false</organismsDiffer>
    <experiments>3</experiments>
</comment>
<comment type="similarity">
    <text evidence="2">Belongs to the PMG family.</text>
</comment>
<keyword id="KW-0416">Keratin</keyword>
<keyword id="KW-1267">Proteomics identification</keyword>
<keyword id="KW-1185">Reference proteome</keyword>
<keyword id="KW-0677">Repeat</keyword>
<accession>Q3LI77</accession>
<accession>A2RRL3</accession>
<name>KR134_HUMAN</name>
<reference key="1">
    <citation type="submission" date="2002-11" db="EMBL/GenBank/DDBJ databases">
        <title>Identification of complete keratin-associated protein (KAP) gene cluster spanning 800 kb region on human chromosome 21q22.11.</title>
        <authorList>
            <person name="Obayashi I."/>
            <person name="Shibuya K."/>
            <person name="Minoshima S."/>
            <person name="Kudoh J."/>
            <person name="Shimizu N."/>
        </authorList>
    </citation>
    <scope>NUCLEOTIDE SEQUENCE [MRNA]</scope>
    <source>
        <tissue>Hair root</tissue>
    </source>
</reference>
<reference key="2">
    <citation type="journal article" date="2004" name="Genome Res.">
        <title>The status, quality, and expansion of the NIH full-length cDNA project: the Mammalian Gene Collection (MGC).</title>
        <authorList>
            <consortium name="The MGC Project Team"/>
        </authorList>
    </citation>
    <scope>NUCLEOTIDE SEQUENCE [LARGE SCALE MRNA]</scope>
    <scope>VARIANT THR-59</scope>
</reference>
<proteinExistence type="evidence at protein level"/>
<gene>
    <name type="primary">KRTAP13-4</name>
    <name type="synonym">KAP13.4</name>
</gene>
<protein>
    <recommendedName>
        <fullName>Keratin-associated protein 13-4</fullName>
    </recommendedName>
</protein>
<sequence length="160" mass="17755">MSYNCCSRNFSSRSFGGYLYYPGSYPSSLVYSTALCSPSTCQLRSSLYRDCQKTCWEPASCQKSCYRPRTSILCCPCQTTCSGSLGFRSSSCRSQGYGSRCCYSLGNGSSGFRFLKYGGCGFPSLSYGSRFCYPNYLASGAWQSSCYRPICGSRFYQFTC</sequence>
<feature type="chain" id="PRO_0000185204" description="Keratin-associated protein 13-4">
    <location>
        <begin position="1"/>
        <end position="160"/>
    </location>
</feature>
<feature type="repeat" description="1">
    <location>
        <begin position="41"/>
        <end position="50"/>
    </location>
</feature>
<feature type="repeat" description="2">
    <location>
        <begin position="51"/>
        <end position="60"/>
    </location>
</feature>
<feature type="repeat" description="3">
    <location>
        <begin position="61"/>
        <end position="70"/>
    </location>
</feature>
<feature type="repeat" description="4">
    <location>
        <begin position="77"/>
        <end position="86"/>
    </location>
</feature>
<feature type="region of interest" description="4 X 10 AA approximate repeats">
    <location>
        <begin position="41"/>
        <end position="86"/>
    </location>
</feature>
<feature type="sequence variant" id="VAR_047849" description="In dbSNP:rs2226548." evidence="1">
    <original>A</original>
    <variation>T</variation>
    <location>
        <position position="59"/>
    </location>
</feature>
<feature type="sequence variant" id="VAR_053472" description="In dbSNP:rs999597.">
    <original>R</original>
    <variation>H</variation>
    <location>
        <position position="154"/>
    </location>
</feature>
<dbReference type="EMBL" id="AB096941">
    <property type="protein sequence ID" value="BAE46356.1"/>
    <property type="molecule type" value="mRNA"/>
</dbReference>
<dbReference type="EMBL" id="BC131691">
    <property type="protein sequence ID" value="AAI31692.1"/>
    <property type="molecule type" value="mRNA"/>
</dbReference>
<dbReference type="CCDS" id="CCDS13592.1"/>
<dbReference type="RefSeq" id="NP_853631.1">
    <property type="nucleotide sequence ID" value="NM_181600.3"/>
</dbReference>
<dbReference type="BioGRID" id="129962">
    <property type="interactions" value="9"/>
</dbReference>
<dbReference type="FunCoup" id="Q3LI77">
    <property type="interactions" value="1"/>
</dbReference>
<dbReference type="IntAct" id="Q3LI77">
    <property type="interactions" value="8"/>
</dbReference>
<dbReference type="STRING" id="9606.ENSP00000334834"/>
<dbReference type="iPTMnet" id="Q3LI77"/>
<dbReference type="PhosphoSitePlus" id="Q3LI77"/>
<dbReference type="BioMuta" id="KRTAP13-4"/>
<dbReference type="DMDM" id="82592930"/>
<dbReference type="MassIVE" id="Q3LI77"/>
<dbReference type="PaxDb" id="9606-ENSP00000334834"/>
<dbReference type="PeptideAtlas" id="Q3LI77"/>
<dbReference type="ProteomicsDB" id="61773"/>
<dbReference type="Antibodypedia" id="76517">
    <property type="antibodies" value="24 antibodies from 4 providers"/>
</dbReference>
<dbReference type="DNASU" id="284827"/>
<dbReference type="Ensembl" id="ENST00000334068.4">
    <property type="protein sequence ID" value="ENSP00000334834.2"/>
    <property type="gene ID" value="ENSG00000186971.4"/>
</dbReference>
<dbReference type="GeneID" id="284827"/>
<dbReference type="KEGG" id="hsa:284827"/>
<dbReference type="MANE-Select" id="ENST00000334068.4">
    <property type="protein sequence ID" value="ENSP00000334834.2"/>
    <property type="RefSeq nucleotide sequence ID" value="NM_181600.3"/>
    <property type="RefSeq protein sequence ID" value="NP_853631.1"/>
</dbReference>
<dbReference type="UCSC" id="uc011acw.3">
    <property type="organism name" value="human"/>
</dbReference>
<dbReference type="AGR" id="HGNC:18926"/>
<dbReference type="CTD" id="284827"/>
<dbReference type="GeneCards" id="KRTAP13-4"/>
<dbReference type="HGNC" id="HGNC:18926">
    <property type="gene designation" value="KRTAP13-4"/>
</dbReference>
<dbReference type="HPA" id="ENSG00000186971">
    <property type="expression patterns" value="Not detected"/>
</dbReference>
<dbReference type="neXtProt" id="NX_Q3LI77"/>
<dbReference type="PharmGKB" id="PA134861175"/>
<dbReference type="VEuPathDB" id="HostDB:ENSG00000186971"/>
<dbReference type="eggNOG" id="ENOG502STG2">
    <property type="taxonomic scope" value="Eukaryota"/>
</dbReference>
<dbReference type="GeneTree" id="ENSGT00940000162756"/>
<dbReference type="HOGENOM" id="CLU_111618_0_0_1"/>
<dbReference type="InParanoid" id="Q3LI77"/>
<dbReference type="OMA" id="CWEPASC"/>
<dbReference type="OrthoDB" id="9835168at2759"/>
<dbReference type="PAN-GO" id="Q3LI77">
    <property type="GO annotations" value="0 GO annotations based on evolutionary models"/>
</dbReference>
<dbReference type="PhylomeDB" id="Q3LI77"/>
<dbReference type="TreeFam" id="TF337331"/>
<dbReference type="PathwayCommons" id="Q3LI77"/>
<dbReference type="Reactome" id="R-HSA-6805567">
    <property type="pathway name" value="Keratinization"/>
</dbReference>
<dbReference type="SignaLink" id="Q3LI77"/>
<dbReference type="BioGRID-ORCS" id="284827">
    <property type="hits" value="15 hits in 1132 CRISPR screens"/>
</dbReference>
<dbReference type="GenomeRNAi" id="284827"/>
<dbReference type="Pharos" id="Q3LI77">
    <property type="development level" value="Tdark"/>
</dbReference>
<dbReference type="PRO" id="PR:Q3LI77"/>
<dbReference type="Proteomes" id="UP000005640">
    <property type="component" value="Chromosome 21"/>
</dbReference>
<dbReference type="RNAct" id="Q3LI77">
    <property type="molecule type" value="protein"/>
</dbReference>
<dbReference type="Bgee" id="ENSG00000186971">
    <property type="expression patterns" value="Expressed in primordial germ cell in gonad and 13 other cell types or tissues"/>
</dbReference>
<dbReference type="GO" id="GO:0005829">
    <property type="term" value="C:cytosol"/>
    <property type="evidence" value="ECO:0000304"/>
    <property type="project" value="Reactome"/>
</dbReference>
<dbReference type="GO" id="GO:0005882">
    <property type="term" value="C:intermediate filament"/>
    <property type="evidence" value="ECO:0007669"/>
    <property type="project" value="UniProtKB-KW"/>
</dbReference>
<dbReference type="InterPro" id="IPR007951">
    <property type="entry name" value="KRTAP_PMG"/>
</dbReference>
<dbReference type="Pfam" id="PF05287">
    <property type="entry name" value="PMG"/>
    <property type="match status" value="1"/>
</dbReference>